<protein>
    <recommendedName>
        <fullName evidence="1">Peptidyl-tRNA hydrolase</fullName>
        <shortName evidence="1">Pth</shortName>
        <ecNumber evidence="1">3.1.1.29</ecNumber>
    </recommendedName>
</protein>
<proteinExistence type="inferred from homology"/>
<reference key="1">
    <citation type="journal article" date="2008" name="Genomics">
        <title>Characterization of ST-4821 complex, a unique Neisseria meningitidis clone.</title>
        <authorList>
            <person name="Peng J."/>
            <person name="Yang L."/>
            <person name="Yang F."/>
            <person name="Yang J."/>
            <person name="Yan Y."/>
            <person name="Nie H."/>
            <person name="Zhang X."/>
            <person name="Xiong Z."/>
            <person name="Jiang Y."/>
            <person name="Cheng F."/>
            <person name="Xu X."/>
            <person name="Chen S."/>
            <person name="Sun L."/>
            <person name="Li W."/>
            <person name="Shen Y."/>
            <person name="Shao Z."/>
            <person name="Liang X."/>
            <person name="Xu J."/>
            <person name="Jin Q."/>
        </authorList>
    </citation>
    <scope>NUCLEOTIDE SEQUENCE [LARGE SCALE GENOMIC DNA]</scope>
    <source>
        <strain>053442</strain>
    </source>
</reference>
<feature type="chain" id="PRO_1000075348" description="Peptidyl-tRNA hydrolase">
    <location>
        <begin position="1"/>
        <end position="192"/>
    </location>
</feature>
<feature type="active site" description="Proton acceptor" evidence="1">
    <location>
        <position position="23"/>
    </location>
</feature>
<feature type="binding site" evidence="1">
    <location>
        <position position="18"/>
    </location>
    <ligand>
        <name>tRNA</name>
        <dbReference type="ChEBI" id="CHEBI:17843"/>
    </ligand>
</feature>
<feature type="binding site" evidence="1">
    <location>
        <position position="69"/>
    </location>
    <ligand>
        <name>tRNA</name>
        <dbReference type="ChEBI" id="CHEBI:17843"/>
    </ligand>
</feature>
<feature type="binding site" evidence="1">
    <location>
        <position position="71"/>
    </location>
    <ligand>
        <name>tRNA</name>
        <dbReference type="ChEBI" id="CHEBI:17843"/>
    </ligand>
</feature>
<feature type="binding site" evidence="1">
    <location>
        <position position="117"/>
    </location>
    <ligand>
        <name>tRNA</name>
        <dbReference type="ChEBI" id="CHEBI:17843"/>
    </ligand>
</feature>
<feature type="site" description="Discriminates between blocked and unblocked aminoacyl-tRNA" evidence="1">
    <location>
        <position position="13"/>
    </location>
</feature>
<feature type="site" description="Stabilizes the basic form of H active site to accept a proton" evidence="1">
    <location>
        <position position="96"/>
    </location>
</feature>
<comment type="function">
    <text evidence="1">Hydrolyzes ribosome-free peptidyl-tRNAs (with 1 or more amino acids incorporated), which drop off the ribosome during protein synthesis, or as a result of ribosome stalling.</text>
</comment>
<comment type="function">
    <text evidence="1">Catalyzes the release of premature peptidyl moieties from peptidyl-tRNA molecules trapped in stalled 50S ribosomal subunits, and thus maintains levels of free tRNAs and 50S ribosomes.</text>
</comment>
<comment type="catalytic activity">
    <reaction evidence="1">
        <text>an N-acyl-L-alpha-aminoacyl-tRNA + H2O = an N-acyl-L-amino acid + a tRNA + H(+)</text>
        <dbReference type="Rhea" id="RHEA:54448"/>
        <dbReference type="Rhea" id="RHEA-COMP:10123"/>
        <dbReference type="Rhea" id="RHEA-COMP:13883"/>
        <dbReference type="ChEBI" id="CHEBI:15377"/>
        <dbReference type="ChEBI" id="CHEBI:15378"/>
        <dbReference type="ChEBI" id="CHEBI:59874"/>
        <dbReference type="ChEBI" id="CHEBI:78442"/>
        <dbReference type="ChEBI" id="CHEBI:138191"/>
        <dbReference type="EC" id="3.1.1.29"/>
    </reaction>
</comment>
<comment type="subunit">
    <text evidence="1">Monomer.</text>
</comment>
<comment type="subcellular location">
    <subcellularLocation>
        <location evidence="1">Cytoplasm</location>
    </subcellularLocation>
</comment>
<comment type="similarity">
    <text evidence="1">Belongs to the PTH family.</text>
</comment>
<accession>A9M3M7</accession>
<sequence>MSNTIKMVVGLGNPGKEYEQTRHNAGFWFLDELAWKWKASFKEEKKFFGEVARAALPDGDVWLLKPATFMNRSGQAIAALAQFYKIKPEEILVVHDELDIPCGRIKFKLGGGNGGHNGLKDIQAKLGTADYYRLRLGIDHPGDRNLVVGYVLNKPSTEHRRQIDDAVAKSLQAIPDILAGKWEEATRFLHSK</sequence>
<organism>
    <name type="scientific">Neisseria meningitidis serogroup C (strain 053442)</name>
    <dbReference type="NCBI Taxonomy" id="374833"/>
    <lineage>
        <taxon>Bacteria</taxon>
        <taxon>Pseudomonadati</taxon>
        <taxon>Pseudomonadota</taxon>
        <taxon>Betaproteobacteria</taxon>
        <taxon>Neisseriales</taxon>
        <taxon>Neisseriaceae</taxon>
        <taxon>Neisseria</taxon>
    </lineage>
</organism>
<evidence type="ECO:0000255" key="1">
    <source>
        <dbReference type="HAMAP-Rule" id="MF_00083"/>
    </source>
</evidence>
<name>PTH_NEIM0</name>
<dbReference type="EC" id="3.1.1.29" evidence="1"/>
<dbReference type="EMBL" id="CP000381">
    <property type="protein sequence ID" value="ABX72952.1"/>
    <property type="molecule type" value="Genomic_DNA"/>
</dbReference>
<dbReference type="RefSeq" id="WP_012221473.1">
    <property type="nucleotide sequence ID" value="NC_010120.1"/>
</dbReference>
<dbReference type="SMR" id="A9M3M7"/>
<dbReference type="KEGG" id="nmn:NMCC_0759"/>
<dbReference type="HOGENOM" id="CLU_062456_3_1_4"/>
<dbReference type="Proteomes" id="UP000001177">
    <property type="component" value="Chromosome"/>
</dbReference>
<dbReference type="GO" id="GO:0005737">
    <property type="term" value="C:cytoplasm"/>
    <property type="evidence" value="ECO:0007669"/>
    <property type="project" value="UniProtKB-SubCell"/>
</dbReference>
<dbReference type="GO" id="GO:0004045">
    <property type="term" value="F:peptidyl-tRNA hydrolase activity"/>
    <property type="evidence" value="ECO:0007669"/>
    <property type="project" value="UniProtKB-UniRule"/>
</dbReference>
<dbReference type="GO" id="GO:0000049">
    <property type="term" value="F:tRNA binding"/>
    <property type="evidence" value="ECO:0007669"/>
    <property type="project" value="UniProtKB-UniRule"/>
</dbReference>
<dbReference type="GO" id="GO:0006515">
    <property type="term" value="P:protein quality control for misfolded or incompletely synthesized proteins"/>
    <property type="evidence" value="ECO:0007669"/>
    <property type="project" value="UniProtKB-UniRule"/>
</dbReference>
<dbReference type="GO" id="GO:0072344">
    <property type="term" value="P:rescue of stalled ribosome"/>
    <property type="evidence" value="ECO:0007669"/>
    <property type="project" value="UniProtKB-UniRule"/>
</dbReference>
<dbReference type="CDD" id="cd00462">
    <property type="entry name" value="PTH"/>
    <property type="match status" value="1"/>
</dbReference>
<dbReference type="FunFam" id="3.40.50.1470:FF:000001">
    <property type="entry name" value="Peptidyl-tRNA hydrolase"/>
    <property type="match status" value="1"/>
</dbReference>
<dbReference type="Gene3D" id="3.40.50.1470">
    <property type="entry name" value="Peptidyl-tRNA hydrolase"/>
    <property type="match status" value="1"/>
</dbReference>
<dbReference type="HAMAP" id="MF_00083">
    <property type="entry name" value="Pept_tRNA_hydro_bact"/>
    <property type="match status" value="1"/>
</dbReference>
<dbReference type="InterPro" id="IPR001328">
    <property type="entry name" value="Pept_tRNA_hydro"/>
</dbReference>
<dbReference type="InterPro" id="IPR018171">
    <property type="entry name" value="Pept_tRNA_hydro_CS"/>
</dbReference>
<dbReference type="InterPro" id="IPR036416">
    <property type="entry name" value="Pept_tRNA_hydro_sf"/>
</dbReference>
<dbReference type="NCBIfam" id="TIGR00447">
    <property type="entry name" value="pth"/>
    <property type="match status" value="1"/>
</dbReference>
<dbReference type="PANTHER" id="PTHR17224">
    <property type="entry name" value="PEPTIDYL-TRNA HYDROLASE"/>
    <property type="match status" value="1"/>
</dbReference>
<dbReference type="PANTHER" id="PTHR17224:SF1">
    <property type="entry name" value="PEPTIDYL-TRNA HYDROLASE"/>
    <property type="match status" value="1"/>
</dbReference>
<dbReference type="Pfam" id="PF01195">
    <property type="entry name" value="Pept_tRNA_hydro"/>
    <property type="match status" value="1"/>
</dbReference>
<dbReference type="SUPFAM" id="SSF53178">
    <property type="entry name" value="Peptidyl-tRNA hydrolase-like"/>
    <property type="match status" value="1"/>
</dbReference>
<dbReference type="PROSITE" id="PS01195">
    <property type="entry name" value="PEPT_TRNA_HYDROL_1"/>
    <property type="match status" value="1"/>
</dbReference>
<dbReference type="PROSITE" id="PS01196">
    <property type="entry name" value="PEPT_TRNA_HYDROL_2"/>
    <property type="match status" value="1"/>
</dbReference>
<gene>
    <name evidence="1" type="primary">pth</name>
    <name type="ordered locus">NMCC_0759</name>
</gene>
<keyword id="KW-0963">Cytoplasm</keyword>
<keyword id="KW-0378">Hydrolase</keyword>
<keyword id="KW-0694">RNA-binding</keyword>
<keyword id="KW-0820">tRNA-binding</keyword>